<gene>
    <name type="primary">OAZ1</name>
    <name type="ordered locus">AGL265W</name>
</gene>
<feature type="chain" id="PRO_0000220866" description="Ornithine decarboxylase antizyme">
    <location>
        <begin position="1"/>
        <end position="255"/>
    </location>
</feature>
<organism>
    <name type="scientific">Eremothecium gossypii (strain ATCC 10895 / CBS 109.51 / FGSC 9923 / NRRL Y-1056)</name>
    <name type="common">Yeast</name>
    <name type="synonym">Ashbya gossypii</name>
    <dbReference type="NCBI Taxonomy" id="284811"/>
    <lineage>
        <taxon>Eukaryota</taxon>
        <taxon>Fungi</taxon>
        <taxon>Dikarya</taxon>
        <taxon>Ascomycota</taxon>
        <taxon>Saccharomycotina</taxon>
        <taxon>Saccharomycetes</taxon>
        <taxon>Saccharomycetales</taxon>
        <taxon>Saccharomycetaceae</taxon>
        <taxon>Eremothecium</taxon>
    </lineage>
</organism>
<accession>Q751H1</accession>
<keyword id="KW-1185">Reference proteome</keyword>
<keyword id="KW-0688">Ribosomal frameshifting</keyword>
<sequence length="255" mass="29498">MMEQLRKKEQHIAKVVGECSTQGAVSVSFSTVQLAKGTCLEKLRPWMLRYRCSSRTGYAEWLADRAGAQSVRMAELLELYWDLIAVVEARFAVVPSEVEEERFYRRFQAHVVRRVGRRITCTARGRACAEDKYPDFQQIGDMYGAVGDEQGVHLYKWVQSSRRLLVLMDERAAGRVDLKRWLVMMMELVDGARMLRGCQALQVYVSREDLVNVKDLLKNLNWIGGELVQNVGDRWSDDEAMVWSDERYVVIRFDC</sequence>
<name>OAZ_EREGS</name>
<reference key="1">
    <citation type="journal article" date="2004" name="Science">
        <title>The Ashbya gossypii genome as a tool for mapping the ancient Saccharomyces cerevisiae genome.</title>
        <authorList>
            <person name="Dietrich F.S."/>
            <person name="Voegeli S."/>
            <person name="Brachat S."/>
            <person name="Lerch A."/>
            <person name="Gates K."/>
            <person name="Steiner S."/>
            <person name="Mohr C."/>
            <person name="Poehlmann R."/>
            <person name="Luedi P."/>
            <person name="Choi S."/>
            <person name="Wing R.A."/>
            <person name="Flavier A."/>
            <person name="Gaffney T.D."/>
            <person name="Philippsen P."/>
        </authorList>
    </citation>
    <scope>NUCLEOTIDE SEQUENCE [LARGE SCALE GENOMIC DNA]</scope>
    <source>
        <strain>ATCC 10895 / CBS 109.51 / FGSC 9923 / NRRL Y-1056</strain>
    </source>
</reference>
<reference key="2">
    <citation type="journal article" date="2013" name="G3 (Bethesda)">
        <title>Genomes of Ashbya fungi isolated from insects reveal four mating-type loci, numerous translocations, lack of transposons, and distinct gene duplications.</title>
        <authorList>
            <person name="Dietrich F.S."/>
            <person name="Voegeli S."/>
            <person name="Kuo S."/>
            <person name="Philippsen P."/>
        </authorList>
    </citation>
    <scope>GENOME REANNOTATION</scope>
    <source>
        <strain>ATCC 10895 / CBS 109.51 / FGSC 9923 / NRRL Y-1056</strain>
    </source>
</reference>
<protein>
    <recommendedName>
        <fullName>Ornithine decarboxylase antizyme</fullName>
    </recommendedName>
</protein>
<evidence type="ECO:0000250" key="1">
    <source>
        <dbReference type="UniProtKB" id="Q02803"/>
    </source>
</evidence>
<evidence type="ECO:0000305" key="2"/>
<proteinExistence type="inferred from homology"/>
<comment type="function">
    <text evidence="1">Ornithine decarboxylase (ODC) antizyme protein that negatively regulates ODC activity and intracellular polyamine biosynthesis in response to increased intracellular polyamine levels. Binds to ODC monomers, inhibiting the assembly of the functional ODC homodimer, and targets the monomers for ubiquitin-independent proteolytic destruction by the 26S proteasome.</text>
</comment>
<comment type="subunit">
    <text evidence="1">Interacts with ODC and thereby sterically blocks ODC homodimerization.</text>
</comment>
<comment type="alternative products">
    <event type="ribosomal frameshifting"/>
    <isoform>
        <id>Q751H1-1</id>
        <name>1</name>
        <sequence type="displayed"/>
    </isoform>
    <text>A ribosomal frameshift occurs between the codons for Ala-63 and Asp-64. An autoregulatory mechanism enables modulation of frameshifting according to the cellular concentration of polyamines.</text>
</comment>
<comment type="similarity">
    <text evidence="2">Belongs to the ODC antizyme family.</text>
</comment>
<dbReference type="EMBL" id="AE016820">
    <property type="protein sequence ID" value="AAS54226.2"/>
    <property type="molecule type" value="Genomic_DNA"/>
</dbReference>
<dbReference type="RefSeq" id="NP_986402.2">
    <molecule id="Q751H1-1"/>
    <property type="nucleotide sequence ID" value="NM_211464.3"/>
</dbReference>
<dbReference type="SMR" id="Q751H1"/>
<dbReference type="STRING" id="284811.Q751H1"/>
<dbReference type="EnsemblFungi" id="AAS54226">
    <molecule id="Q751H1-1"/>
    <property type="protein sequence ID" value="AAS54226"/>
    <property type="gene ID" value="AGOS_AGL265W"/>
</dbReference>
<dbReference type="GeneID" id="4622695"/>
<dbReference type="KEGG" id="ago:AGOS_AGL265W"/>
<dbReference type="eggNOG" id="ENOG502RZPH">
    <property type="taxonomic scope" value="Eukaryota"/>
</dbReference>
<dbReference type="HOGENOM" id="CLU_087076_0_0_1"/>
<dbReference type="InParanoid" id="Q751H1"/>
<dbReference type="OMA" id="DFQQIGD"/>
<dbReference type="OrthoDB" id="4033519at2759"/>
<dbReference type="Proteomes" id="UP000000591">
    <property type="component" value="Chromosome VII"/>
</dbReference>
<dbReference type="GO" id="GO:0008073">
    <property type="term" value="F:ornithine decarboxylase inhibitor activity"/>
    <property type="evidence" value="ECO:0007669"/>
    <property type="project" value="InterPro"/>
</dbReference>
<dbReference type="GO" id="GO:0075523">
    <property type="term" value="P:viral translational frameshifting"/>
    <property type="evidence" value="ECO:0007669"/>
    <property type="project" value="UniProtKB-KW"/>
</dbReference>
<dbReference type="InterPro" id="IPR002993">
    <property type="entry name" value="ODC_AZ"/>
</dbReference>
<dbReference type="Pfam" id="PF02100">
    <property type="entry name" value="ODC_AZ"/>
    <property type="match status" value="1"/>
</dbReference>